<organism>
    <name type="scientific">Drosophila mojavensis</name>
    <name type="common">Fruit fly</name>
    <dbReference type="NCBI Taxonomy" id="7230"/>
    <lineage>
        <taxon>Eukaryota</taxon>
        <taxon>Metazoa</taxon>
        <taxon>Ecdysozoa</taxon>
        <taxon>Arthropoda</taxon>
        <taxon>Hexapoda</taxon>
        <taxon>Insecta</taxon>
        <taxon>Pterygota</taxon>
        <taxon>Neoptera</taxon>
        <taxon>Endopterygota</taxon>
        <taxon>Diptera</taxon>
        <taxon>Brachycera</taxon>
        <taxon>Muscomorpha</taxon>
        <taxon>Ephydroidea</taxon>
        <taxon>Drosophilidae</taxon>
        <taxon>Drosophila</taxon>
    </lineage>
</organism>
<dbReference type="EC" id="5.6.1.1" evidence="3"/>
<dbReference type="EMBL" id="CH933806">
    <property type="protein sequence ID" value="EDW14223.1"/>
    <property type="molecule type" value="Genomic_DNA"/>
</dbReference>
<dbReference type="SMR" id="B4K799"/>
<dbReference type="FunCoup" id="B4K799">
    <property type="interactions" value="1621"/>
</dbReference>
<dbReference type="EnsemblMetazoa" id="FBtr0174870">
    <property type="protein sequence ID" value="FBpp0173362"/>
    <property type="gene ID" value="FBgn0146868"/>
</dbReference>
<dbReference type="EnsemblMetazoa" id="XM_001998726.4">
    <property type="protein sequence ID" value="XP_001998762.1"/>
    <property type="gene ID" value="LOC6572656"/>
</dbReference>
<dbReference type="GeneID" id="6572656"/>
<dbReference type="KEGG" id="dmo:Dmoj_GI24145"/>
<dbReference type="eggNOG" id="KOG0740">
    <property type="taxonomic scope" value="Eukaryota"/>
</dbReference>
<dbReference type="HOGENOM" id="CLU_000688_21_5_1"/>
<dbReference type="InParanoid" id="B4K799"/>
<dbReference type="OMA" id="KSREPML"/>
<dbReference type="OrthoDB" id="10251136at2759"/>
<dbReference type="PhylomeDB" id="B4K799"/>
<dbReference type="Proteomes" id="UP000009192">
    <property type="component" value="Unassembled WGS sequence"/>
</dbReference>
<dbReference type="GO" id="GO:0005813">
    <property type="term" value="C:centrosome"/>
    <property type="evidence" value="ECO:0000250"/>
    <property type="project" value="UniProtKB"/>
</dbReference>
<dbReference type="GO" id="GO:0005694">
    <property type="term" value="C:chromosome"/>
    <property type="evidence" value="ECO:0007669"/>
    <property type="project" value="UniProtKB-SubCell"/>
</dbReference>
<dbReference type="GO" id="GO:0005811">
    <property type="term" value="C:lipid droplet"/>
    <property type="evidence" value="ECO:0007669"/>
    <property type="project" value="UniProtKB-SubCell"/>
</dbReference>
<dbReference type="GO" id="GO:0016020">
    <property type="term" value="C:membrane"/>
    <property type="evidence" value="ECO:0007669"/>
    <property type="project" value="UniProtKB-SubCell"/>
</dbReference>
<dbReference type="GO" id="GO:0005874">
    <property type="term" value="C:microtubule"/>
    <property type="evidence" value="ECO:0007669"/>
    <property type="project" value="UniProtKB-UniRule"/>
</dbReference>
<dbReference type="GO" id="GO:0031594">
    <property type="term" value="C:neuromuscular junction"/>
    <property type="evidence" value="ECO:0007669"/>
    <property type="project" value="EnsemblMetazoa"/>
</dbReference>
<dbReference type="GO" id="GO:0005819">
    <property type="term" value="C:spindle"/>
    <property type="evidence" value="ECO:0007669"/>
    <property type="project" value="UniProtKB-UniRule"/>
</dbReference>
<dbReference type="GO" id="GO:0008021">
    <property type="term" value="C:synaptic vesicle"/>
    <property type="evidence" value="ECO:0007669"/>
    <property type="project" value="EnsemblMetazoa"/>
</dbReference>
<dbReference type="GO" id="GO:0043195">
    <property type="term" value="C:terminal bouton"/>
    <property type="evidence" value="ECO:0007669"/>
    <property type="project" value="EnsemblMetazoa"/>
</dbReference>
<dbReference type="GO" id="GO:0005524">
    <property type="term" value="F:ATP binding"/>
    <property type="evidence" value="ECO:0007669"/>
    <property type="project" value="UniProtKB-UniRule"/>
</dbReference>
<dbReference type="GO" id="GO:0016887">
    <property type="term" value="F:ATP hydrolysis activity"/>
    <property type="evidence" value="ECO:0007669"/>
    <property type="project" value="InterPro"/>
</dbReference>
<dbReference type="GO" id="GO:0008017">
    <property type="term" value="F:microtubule binding"/>
    <property type="evidence" value="ECO:0000250"/>
    <property type="project" value="UniProtKB"/>
</dbReference>
<dbReference type="GO" id="GO:0008568">
    <property type="term" value="F:microtubule severing ATPase activity"/>
    <property type="evidence" value="ECO:0000250"/>
    <property type="project" value="UniProtKB"/>
</dbReference>
<dbReference type="GO" id="GO:0008344">
    <property type="term" value="P:adult locomotory behavior"/>
    <property type="evidence" value="ECO:0007669"/>
    <property type="project" value="UniProtKB-UniRule"/>
</dbReference>
<dbReference type="GO" id="GO:0051301">
    <property type="term" value="P:cell division"/>
    <property type="evidence" value="ECO:0007669"/>
    <property type="project" value="UniProtKB-KW"/>
</dbReference>
<dbReference type="GO" id="GO:0035099">
    <property type="term" value="P:hemocyte migration"/>
    <property type="evidence" value="ECO:0007669"/>
    <property type="project" value="EnsemblMetazoa"/>
</dbReference>
<dbReference type="GO" id="GO:0051013">
    <property type="term" value="P:microtubule severing"/>
    <property type="evidence" value="ECO:0000250"/>
    <property type="project" value="UniProtKB"/>
</dbReference>
<dbReference type="GO" id="GO:0007079">
    <property type="term" value="P:mitotic chromosome movement towards spindle pole"/>
    <property type="evidence" value="ECO:0007669"/>
    <property type="project" value="UniProtKB-UniRule"/>
</dbReference>
<dbReference type="GO" id="GO:0000022">
    <property type="term" value="P:mitotic spindle elongation"/>
    <property type="evidence" value="ECO:0007669"/>
    <property type="project" value="UniProtKB-UniRule"/>
</dbReference>
<dbReference type="GO" id="GO:0007026">
    <property type="term" value="P:negative regulation of microtubule depolymerization"/>
    <property type="evidence" value="ECO:0007669"/>
    <property type="project" value="EnsemblMetazoa"/>
</dbReference>
<dbReference type="GO" id="GO:1900074">
    <property type="term" value="P:negative regulation of neuromuscular synaptic transmission"/>
    <property type="evidence" value="ECO:0007669"/>
    <property type="project" value="EnsemblMetazoa"/>
</dbReference>
<dbReference type="GO" id="GO:0045886">
    <property type="term" value="P:negative regulation of synaptic assembly at neuromuscular junction"/>
    <property type="evidence" value="ECO:0007669"/>
    <property type="project" value="EnsemblMetazoa"/>
</dbReference>
<dbReference type="GO" id="GO:0007399">
    <property type="term" value="P:nervous system development"/>
    <property type="evidence" value="ECO:0007669"/>
    <property type="project" value="UniProtKB-KW"/>
</dbReference>
<dbReference type="GO" id="GO:0048691">
    <property type="term" value="P:positive regulation of axon extension involved in regeneration"/>
    <property type="evidence" value="ECO:0007669"/>
    <property type="project" value="EnsemblMetazoa"/>
</dbReference>
<dbReference type="GO" id="GO:0050775">
    <property type="term" value="P:positive regulation of dendrite morphogenesis"/>
    <property type="evidence" value="ECO:0007669"/>
    <property type="project" value="EnsemblMetazoa"/>
</dbReference>
<dbReference type="GO" id="GO:0045834">
    <property type="term" value="P:positive regulation of lipid metabolic process"/>
    <property type="evidence" value="ECO:0007669"/>
    <property type="project" value="EnsemblMetazoa"/>
</dbReference>
<dbReference type="GO" id="GO:0031117">
    <property type="term" value="P:positive regulation of microtubule depolymerization"/>
    <property type="evidence" value="ECO:0007669"/>
    <property type="project" value="UniProtKB-UniRule"/>
</dbReference>
<dbReference type="GO" id="GO:1900075">
    <property type="term" value="P:positive regulation of neuromuscular synaptic transmission"/>
    <property type="evidence" value="ECO:0007669"/>
    <property type="project" value="EnsemblMetazoa"/>
</dbReference>
<dbReference type="GO" id="GO:0045887">
    <property type="term" value="P:positive regulation of synaptic assembly at neuromuscular junction"/>
    <property type="evidence" value="ECO:0007669"/>
    <property type="project" value="EnsemblMetazoa"/>
</dbReference>
<dbReference type="GO" id="GO:0034214">
    <property type="term" value="P:protein hexamerization"/>
    <property type="evidence" value="ECO:0007669"/>
    <property type="project" value="UniProtKB-UniRule"/>
</dbReference>
<dbReference type="GO" id="GO:2000331">
    <property type="term" value="P:regulation of terminal button organization"/>
    <property type="evidence" value="ECO:0007669"/>
    <property type="project" value="EnsemblMetazoa"/>
</dbReference>
<dbReference type="CDD" id="cd02679">
    <property type="entry name" value="MIT_spastin"/>
    <property type="match status" value="1"/>
</dbReference>
<dbReference type="CDD" id="cd19524">
    <property type="entry name" value="RecA-like_spastin"/>
    <property type="match status" value="1"/>
</dbReference>
<dbReference type="FunFam" id="3.40.50.300:FF:000093">
    <property type="entry name" value="Fidgetin-like 1"/>
    <property type="match status" value="1"/>
</dbReference>
<dbReference type="FunFam" id="1.10.8.60:FF:000036">
    <property type="entry name" value="Spastin"/>
    <property type="match status" value="1"/>
</dbReference>
<dbReference type="FunFam" id="1.20.58.80:FF:000006">
    <property type="entry name" value="Spastin"/>
    <property type="match status" value="1"/>
</dbReference>
<dbReference type="Gene3D" id="1.10.8.60">
    <property type="match status" value="1"/>
</dbReference>
<dbReference type="Gene3D" id="3.40.50.300">
    <property type="entry name" value="P-loop containing nucleotide triphosphate hydrolases"/>
    <property type="match status" value="1"/>
</dbReference>
<dbReference type="Gene3D" id="1.20.58.80">
    <property type="entry name" value="Phosphotransferase system, lactose/cellobiose-type IIA subunit"/>
    <property type="match status" value="1"/>
</dbReference>
<dbReference type="HAMAP" id="MF_03021">
    <property type="entry name" value="Spastin"/>
    <property type="match status" value="1"/>
</dbReference>
<dbReference type="InterPro" id="IPR003593">
    <property type="entry name" value="AAA+_ATPase"/>
</dbReference>
<dbReference type="InterPro" id="IPR041569">
    <property type="entry name" value="AAA_lid_3"/>
</dbReference>
<dbReference type="InterPro" id="IPR003959">
    <property type="entry name" value="ATPase_AAA_core"/>
</dbReference>
<dbReference type="InterPro" id="IPR003960">
    <property type="entry name" value="ATPase_AAA_CS"/>
</dbReference>
<dbReference type="InterPro" id="IPR007330">
    <property type="entry name" value="MIT_dom"/>
</dbReference>
<dbReference type="InterPro" id="IPR036181">
    <property type="entry name" value="MIT_dom_sf"/>
</dbReference>
<dbReference type="InterPro" id="IPR050304">
    <property type="entry name" value="MT-severing_AAA_ATPase"/>
</dbReference>
<dbReference type="InterPro" id="IPR027417">
    <property type="entry name" value="P-loop_NTPase"/>
</dbReference>
<dbReference type="InterPro" id="IPR015415">
    <property type="entry name" value="Spast_Vps4_C"/>
</dbReference>
<dbReference type="InterPro" id="IPR017179">
    <property type="entry name" value="Spastin"/>
</dbReference>
<dbReference type="PANTHER" id="PTHR23074">
    <property type="entry name" value="AAA DOMAIN-CONTAINING"/>
    <property type="match status" value="1"/>
</dbReference>
<dbReference type="PANTHER" id="PTHR23074:SF86">
    <property type="entry name" value="SPASTIN"/>
    <property type="match status" value="1"/>
</dbReference>
<dbReference type="Pfam" id="PF00004">
    <property type="entry name" value="AAA"/>
    <property type="match status" value="1"/>
</dbReference>
<dbReference type="Pfam" id="PF17862">
    <property type="entry name" value="AAA_lid_3"/>
    <property type="match status" value="1"/>
</dbReference>
<dbReference type="Pfam" id="PF09336">
    <property type="entry name" value="Vps4_C"/>
    <property type="match status" value="1"/>
</dbReference>
<dbReference type="SMART" id="SM00382">
    <property type="entry name" value="AAA"/>
    <property type="match status" value="1"/>
</dbReference>
<dbReference type="SMART" id="SM00745">
    <property type="entry name" value="MIT"/>
    <property type="match status" value="1"/>
</dbReference>
<dbReference type="SUPFAM" id="SSF116846">
    <property type="entry name" value="MIT domain"/>
    <property type="match status" value="1"/>
</dbReference>
<dbReference type="SUPFAM" id="SSF52540">
    <property type="entry name" value="P-loop containing nucleoside triphosphate hydrolases"/>
    <property type="match status" value="1"/>
</dbReference>
<dbReference type="PROSITE" id="PS00674">
    <property type="entry name" value="AAA"/>
    <property type="match status" value="1"/>
</dbReference>
<feature type="chain" id="PRO_0000367145" description="Spastin">
    <location>
        <begin position="1"/>
        <end position="765"/>
    </location>
</feature>
<feature type="topological domain" description="Cytoplasmic" evidence="3">
    <location>
        <begin position="1"/>
        <end position="107"/>
    </location>
</feature>
<feature type="intramembrane region" description="Helical" evidence="3">
    <location>
        <begin position="108"/>
        <end position="128"/>
    </location>
</feature>
<feature type="topological domain" description="Cytoplasmic" evidence="3">
    <location>
        <begin position="129"/>
        <end position="765"/>
    </location>
</feature>
<feature type="domain" description="MIT" evidence="2">
    <location>
        <begin position="218"/>
        <end position="293"/>
    </location>
</feature>
<feature type="region of interest" description="Required for localization to punctate cytoplasmic foci" evidence="1">
    <location>
        <begin position="1"/>
        <end position="195"/>
    </location>
</feature>
<feature type="region of interest" description="Disordered" evidence="4">
    <location>
        <begin position="1"/>
        <end position="94"/>
    </location>
</feature>
<feature type="region of interest" description="Sufficient for interaction with microtubules and microtubule severing" evidence="1">
    <location>
        <begin position="193"/>
        <end position="765"/>
    </location>
</feature>
<feature type="region of interest" description="Disordered" evidence="4">
    <location>
        <begin position="329"/>
        <end position="462"/>
    </location>
</feature>
<feature type="region of interest" description="Required for interaction with microtubules" evidence="1">
    <location>
        <begin position="446"/>
        <end position="462"/>
    </location>
</feature>
<feature type="compositionally biased region" description="Low complexity" evidence="4">
    <location>
        <begin position="8"/>
        <end position="19"/>
    </location>
</feature>
<feature type="compositionally biased region" description="Polar residues" evidence="4">
    <location>
        <begin position="48"/>
        <end position="58"/>
    </location>
</feature>
<feature type="compositionally biased region" description="Low complexity" evidence="4">
    <location>
        <begin position="59"/>
        <end position="72"/>
    </location>
</feature>
<feature type="compositionally biased region" description="Low complexity" evidence="4">
    <location>
        <begin position="355"/>
        <end position="364"/>
    </location>
</feature>
<feature type="compositionally biased region" description="Polar residues" evidence="4">
    <location>
        <begin position="389"/>
        <end position="407"/>
    </location>
</feature>
<feature type="compositionally biased region" description="Polar residues" evidence="4">
    <location>
        <begin position="428"/>
        <end position="444"/>
    </location>
</feature>
<feature type="binding site" evidence="3">
    <location>
        <begin position="530"/>
        <end position="537"/>
    </location>
    <ligand>
        <name>ATP</name>
        <dbReference type="ChEBI" id="CHEBI:30616"/>
    </ligand>
</feature>
<comment type="function">
    <text evidence="3">ATP-dependent microtubule severing protein. Stimulates microtubule minus-end depolymerization and poleward microtubule flux in the mitotic spindle. Regulates microtubule stability in the neuromuscular junction synapse. Involved in lipid metabolism by regulating the size and distribution of lipid droplets. Involved in axon regeneration by regulating microtubule severing.</text>
</comment>
<comment type="catalytic activity">
    <reaction evidence="3">
        <text>n ATP + n H2O + a microtubule = n ADP + n phosphate + (n+1) alpha/beta tubulin heterodimers.</text>
        <dbReference type="EC" id="5.6.1.1"/>
    </reaction>
</comment>
<comment type="subunit">
    <text evidence="3">Homohexamer. The homohexamer is stabilized by ATP-binding. The homohexamer may adopt a ring conformation through which microtubules pass prior to being severed. Interacts with microtubules. Interacts with atl; may be involved in microtubule dynamics.</text>
</comment>
<comment type="subcellular location">
    <subcellularLocation>
        <location evidence="3">Membrane</location>
        <topology evidence="3">Peripheral membrane protein</topology>
    </subcellularLocation>
    <subcellularLocation>
        <location evidence="3">Cytoplasm</location>
        <location evidence="3">Cytoskeleton</location>
        <location evidence="3">Microtubule organizing center</location>
        <location evidence="3">Centrosome</location>
    </subcellularLocation>
    <subcellularLocation>
        <location evidence="3">Cytoplasm</location>
        <location evidence="3">Cytoskeleton</location>
    </subcellularLocation>
    <subcellularLocation>
        <location evidence="3">Chromosome</location>
    </subcellularLocation>
    <subcellularLocation>
        <location evidence="3">Lipid droplet</location>
    </subcellularLocation>
    <text evidence="3">Forms an intramembrane hairpin-like structure in the membrane. Colocalizes with cellular microtubule arrays. Localizes to chromosomes from prometaphase/metaphase to anaphase, and this requires microtubules. Localizes to discrete punctate cytoplasmic foci which may correspond to secretory vesicles.</text>
</comment>
<comment type="similarity">
    <text evidence="3">Belongs to the AAA ATPase family. Spastin subfamily.</text>
</comment>
<name>SPAST_DROMO</name>
<proteinExistence type="inferred from homology"/>
<sequence>MVRTKNQSSSSSASSSTKSPVKISGGGSSGANRSRSCSEALIDDGKTSSKLSSNRQRATITTTTTSTTPGSSPDDDTTDADLTPTSGYGPRGGTSVHKQNLYVVSFPIIFLFNVLRSLIYQLFCIFRYLYCASTKVIYRSPHRRDCNIEIVVQNSKEQQSIICPLERNTSDGIEKAQQLLPQRQRALLPLEMATNRGGSGGYSPGPGDPLLAKQKHHHRRAFEYISKALKIDEENEGHKELAIELYRKGIKELEDGIAVDCWSGRGDVWDRAQRLHEKMQTNLSMARDRLHFLALREEDLQMQRLSLMDPPKNKQQVTSKFKQPMLVGQTNSKAAAVEPSKITMRSSGYGPKPVSGTGSSAGTSKALQAASGRKLTIGNKRPGNLAVANKSQTLPRNLGSKTTSTSVGAALQRQPGKTAATPPAVRRQFSSGRNTPPQRSRTPINNNAASGSGSGSGASTPMISVKGVEQKLVQLIMDEIVEGGAKVEWTDIAGQDVAKQALQEMVILPSVRPELFTGLRAPAKGLLLFGPPGNGKTLLARAVATECSATFLNISAASLTSKYVGDGEKLVRALFAVARHLQPSIIFIDEVDSLLSERSSNEHEASRRLKTEFLVEFDGLPGNPEGDRIVVLAATNRPQELDEAALRRFTKRVYVSLPEVQTRELLLSRLLQKQGSPLDTEALARLAKITDGYSGSDLTALAKDAALEPIRELNVEQVKCLDISAMRPITEKDFHNSLKRIRRSVAPQSLNSYEKWSQDYGDITI</sequence>
<reference key="1">
    <citation type="journal article" date="2007" name="Nature">
        <title>Evolution of genes and genomes on the Drosophila phylogeny.</title>
        <authorList>
            <consortium name="Drosophila 12 genomes consortium"/>
        </authorList>
    </citation>
    <scope>NUCLEOTIDE SEQUENCE [LARGE SCALE GENOMIC DNA]</scope>
    <source>
        <strain>Tucson 15081-1352.22</strain>
    </source>
</reference>
<accession>B4K799</accession>
<keyword id="KW-0067">ATP-binding</keyword>
<keyword id="KW-0131">Cell cycle</keyword>
<keyword id="KW-0132">Cell division</keyword>
<keyword id="KW-0158">Chromosome</keyword>
<keyword id="KW-0963">Cytoplasm</keyword>
<keyword id="KW-0206">Cytoskeleton</keyword>
<keyword id="KW-0217">Developmental protein</keyword>
<keyword id="KW-0221">Differentiation</keyword>
<keyword id="KW-0413">Isomerase</keyword>
<keyword id="KW-0551">Lipid droplet</keyword>
<keyword id="KW-0472">Membrane</keyword>
<keyword id="KW-0493">Microtubule</keyword>
<keyword id="KW-0498">Mitosis</keyword>
<keyword id="KW-0524">Neurogenesis</keyword>
<keyword id="KW-0547">Nucleotide-binding</keyword>
<keyword id="KW-1185">Reference proteome</keyword>
<evidence type="ECO:0000250" key="1">
    <source>
        <dbReference type="UniProtKB" id="Q8I0P1"/>
    </source>
</evidence>
<evidence type="ECO:0000255" key="2"/>
<evidence type="ECO:0000255" key="3">
    <source>
        <dbReference type="HAMAP-Rule" id="MF_03021"/>
    </source>
</evidence>
<evidence type="ECO:0000256" key="4">
    <source>
        <dbReference type="SAM" id="MobiDB-lite"/>
    </source>
</evidence>
<protein>
    <recommendedName>
        <fullName evidence="3">Spastin</fullName>
        <ecNumber evidence="3">5.6.1.1</ecNumber>
    </recommendedName>
</protein>
<gene>
    <name evidence="3" type="primary">spas</name>
    <name type="ORF">GI24145</name>
</gene>